<evidence type="ECO:0000250" key="1"/>
<evidence type="ECO:0000255" key="2"/>
<evidence type="ECO:0000305" key="3"/>
<sequence>MTTFLPIIFSSLVVVIFVIGNFANGFIALVNSIEWFKXQKISFADQILTALAVSRVGLLWVLLLNWYSTVLNPAFYSVEVRTTAYNVWAVTGHFSNWLATSLSIFYLLKIANFSNFIFLHLKRRVKSVILVMLLGPLLFLACQLFMINMKEIVRTKEYEGNMTWKIKLRSAVYLSDATVTTLGNLVPFTLTLLCFLLLICSLCKHLKKMQLHGKGSQDPSTKVHIKVLQTVISFLLLCAIYFLSIMISVWSFGSLKNKPVFMFCKAIRFSYPSIHPFILIWGNKKLKQTFLSVLRQVRYWVKGEKPSSP</sequence>
<gene>
    <name type="primary">TAS2R31</name>
    <name type="synonym">TAS2R44</name>
</gene>
<feature type="chain" id="PRO_0000082310" description="Taste receptor type 2 member 31">
    <location>
        <begin position="1"/>
        <end position="309"/>
    </location>
</feature>
<feature type="topological domain" description="Extracellular" evidence="2">
    <location>
        <begin position="1"/>
        <end position="2"/>
    </location>
</feature>
<feature type="transmembrane region" description="Helical; Name=1" evidence="2">
    <location>
        <begin position="3"/>
        <end position="23"/>
    </location>
</feature>
<feature type="topological domain" description="Cytoplasmic" evidence="2">
    <location>
        <begin position="24"/>
        <end position="55"/>
    </location>
</feature>
<feature type="transmembrane region" description="Helical; Name=2" evidence="2">
    <location>
        <begin position="56"/>
        <end position="76"/>
    </location>
</feature>
<feature type="topological domain" description="Extracellular" evidence="2">
    <location>
        <begin position="77"/>
        <end position="100"/>
    </location>
</feature>
<feature type="transmembrane region" description="Helical; Name=3" evidence="2">
    <location>
        <begin position="101"/>
        <end position="121"/>
    </location>
</feature>
<feature type="topological domain" description="Cytoplasmic" evidence="2">
    <location>
        <begin position="122"/>
        <end position="126"/>
    </location>
</feature>
<feature type="transmembrane region" description="Helical; Name=4" evidence="2">
    <location>
        <begin position="127"/>
        <end position="147"/>
    </location>
</feature>
<feature type="topological domain" description="Extracellular" evidence="2">
    <location>
        <begin position="148"/>
        <end position="181"/>
    </location>
</feature>
<feature type="transmembrane region" description="Helical; Name=5" evidence="2">
    <location>
        <begin position="182"/>
        <end position="202"/>
    </location>
</feature>
<feature type="topological domain" description="Cytoplasmic" evidence="2">
    <location>
        <begin position="203"/>
        <end position="229"/>
    </location>
</feature>
<feature type="transmembrane region" description="Helical; Name=6" evidence="2">
    <location>
        <begin position="230"/>
        <end position="250"/>
    </location>
</feature>
<feature type="topological domain" description="Extracellular" evidence="2">
    <location>
        <begin position="251"/>
        <end position="259"/>
    </location>
</feature>
<feature type="transmembrane region" description="Helical; Name=7" evidence="2">
    <location>
        <begin position="260"/>
        <end position="280"/>
    </location>
</feature>
<feature type="topological domain" description="Cytoplasmic" evidence="2">
    <location>
        <begin position="281"/>
        <end position="309"/>
    </location>
</feature>
<feature type="glycosylation site" description="N-linked (GlcNAc...) asparagine" evidence="2">
    <location>
        <position position="161"/>
    </location>
</feature>
<feature type="sequence conflict" description="In Ref. 2; AAV28576." evidence="3" ref="2">
    <original>L</original>
    <variation>I</variation>
    <location>
        <position position="5"/>
    </location>
</feature>
<feature type="sequence conflict" description="In Ref. 2; AAV28576." evidence="3" ref="2">
    <original>F</original>
    <variation>L</variation>
    <location>
        <position position="116"/>
    </location>
</feature>
<reference key="1">
    <citation type="journal article" date="2005" name="Mol. Biol. Evol.">
        <title>Evolution of bitter taste receptors in humans and apes.</title>
        <authorList>
            <person name="Fischer A."/>
            <person name="Gilad Y."/>
            <person name="Man O."/>
            <person name="Paeaebo S."/>
        </authorList>
    </citation>
    <scope>NUCLEOTIDE SEQUENCE [GENOMIC DNA]</scope>
</reference>
<reference key="2">
    <citation type="journal article" date="2004" name="Proc. Natl. Acad. Sci. U.S.A.">
        <title>Divergence of T2R chemosensory receptor families in humans, bonobos, and chimpanzees.</title>
        <authorList>
            <person name="Parry C.M."/>
            <person name="Erkner A."/>
            <person name="le Coutre J."/>
        </authorList>
    </citation>
    <scope>NUCLEOTIDE SEQUENCE [GENOMIC DNA]</scope>
</reference>
<accession>Q646E0</accession>
<accession>Q5Y4Z9</accession>
<proteinExistence type="inferred from homology"/>
<comment type="function">
    <text evidence="1">Receptor that may play a role in the perception of bitterness and is gustducin-linked. May play a role in sensing the chemical composition of the gastrointestinal content. The activity of this receptor may stimulate alpha gustducin, mediate PLC-beta-2 activation and lead to the gating of TRPM5 (By similarity).</text>
</comment>
<comment type="subcellular location">
    <subcellularLocation>
        <location>Membrane</location>
        <topology>Multi-pass membrane protein</topology>
    </subcellularLocation>
</comment>
<comment type="miscellaneous">
    <text>Most taste cells may be activated by a limited number of bitter compounds; individual taste cells can discriminate among bitter stimuli.</text>
</comment>
<comment type="similarity">
    <text evidence="3">Belongs to the G-protein coupled receptor T2R family.</text>
</comment>
<protein>
    <recommendedName>
        <fullName>Taste receptor type 2 member 31</fullName>
        <shortName>T2R31</shortName>
    </recommendedName>
    <alternativeName>
        <fullName>Taste receptor type 2 member 44</fullName>
        <shortName>T2R44</shortName>
    </alternativeName>
</protein>
<organism>
    <name type="scientific">Pan paniscus</name>
    <name type="common">Pygmy chimpanzee</name>
    <name type="synonym">Bonobo</name>
    <dbReference type="NCBI Taxonomy" id="9597"/>
    <lineage>
        <taxon>Eukaryota</taxon>
        <taxon>Metazoa</taxon>
        <taxon>Chordata</taxon>
        <taxon>Craniata</taxon>
        <taxon>Vertebrata</taxon>
        <taxon>Euteleostomi</taxon>
        <taxon>Mammalia</taxon>
        <taxon>Eutheria</taxon>
        <taxon>Euarchontoglires</taxon>
        <taxon>Primates</taxon>
        <taxon>Haplorrhini</taxon>
        <taxon>Catarrhini</taxon>
        <taxon>Hominidae</taxon>
        <taxon>Pan</taxon>
    </lineage>
</organism>
<name>T2R31_PANPA</name>
<keyword id="KW-0297">G-protein coupled receptor</keyword>
<keyword id="KW-0325">Glycoprotein</keyword>
<keyword id="KW-0472">Membrane</keyword>
<keyword id="KW-0675">Receptor</keyword>
<keyword id="KW-1185">Reference proteome</keyword>
<keyword id="KW-0716">Sensory transduction</keyword>
<keyword id="KW-0919">Taste</keyword>
<keyword id="KW-0807">Transducer</keyword>
<keyword id="KW-0812">Transmembrane</keyword>
<keyword id="KW-1133">Transmembrane helix</keyword>
<dbReference type="EMBL" id="AY724849">
    <property type="protein sequence ID" value="AAU21079.1"/>
    <property type="molecule type" value="Genomic_DNA"/>
</dbReference>
<dbReference type="EMBL" id="AY677148">
    <property type="protein sequence ID" value="AAV28576.1"/>
    <property type="molecule type" value="Genomic_DNA"/>
</dbReference>
<dbReference type="STRING" id="9597.ENSPPAP00000006534"/>
<dbReference type="GlyCosmos" id="Q646E0">
    <property type="glycosylation" value="1 site, No reported glycans"/>
</dbReference>
<dbReference type="eggNOG" id="ENOG502TE6U">
    <property type="taxonomic scope" value="Eukaryota"/>
</dbReference>
<dbReference type="Proteomes" id="UP000240080">
    <property type="component" value="Unplaced"/>
</dbReference>
<dbReference type="GO" id="GO:0005886">
    <property type="term" value="C:plasma membrane"/>
    <property type="evidence" value="ECO:0007669"/>
    <property type="project" value="UniProtKB-ARBA"/>
</dbReference>
<dbReference type="GO" id="GO:0033038">
    <property type="term" value="F:bitter taste receptor activity"/>
    <property type="evidence" value="ECO:0007669"/>
    <property type="project" value="InterPro"/>
</dbReference>
<dbReference type="GO" id="GO:0004930">
    <property type="term" value="F:G protein-coupled receptor activity"/>
    <property type="evidence" value="ECO:0007669"/>
    <property type="project" value="UniProtKB-KW"/>
</dbReference>
<dbReference type="CDD" id="cd15027">
    <property type="entry name" value="7tm_TAS2R43-like"/>
    <property type="match status" value="1"/>
</dbReference>
<dbReference type="FunFam" id="1.20.1070.10:FF:000042">
    <property type="entry name" value="Taste receptor type 2 member 7"/>
    <property type="match status" value="1"/>
</dbReference>
<dbReference type="Gene3D" id="1.20.1070.10">
    <property type="entry name" value="Rhodopsin 7-helix transmembrane proteins"/>
    <property type="match status" value="1"/>
</dbReference>
<dbReference type="InterPro" id="IPR007960">
    <property type="entry name" value="TAS2R"/>
</dbReference>
<dbReference type="PANTHER" id="PTHR11394">
    <property type="entry name" value="TASTE RECEPTOR TYPE 2"/>
    <property type="match status" value="1"/>
</dbReference>
<dbReference type="PANTHER" id="PTHR11394:SF129">
    <property type="entry name" value="TASTE RECEPTOR TYPE 2 MEMBER 31"/>
    <property type="match status" value="1"/>
</dbReference>
<dbReference type="Pfam" id="PF05296">
    <property type="entry name" value="TAS2R"/>
    <property type="match status" value="1"/>
</dbReference>
<dbReference type="SUPFAM" id="SSF81321">
    <property type="entry name" value="Family A G protein-coupled receptor-like"/>
    <property type="match status" value="1"/>
</dbReference>